<dbReference type="EC" id="6.3.5.3" evidence="1"/>
<dbReference type="EC" id="3.5.1.2" evidence="1"/>
<dbReference type="EMBL" id="AP006627">
    <property type="protein sequence ID" value="BAD63568.1"/>
    <property type="molecule type" value="Genomic_DNA"/>
</dbReference>
<dbReference type="RefSeq" id="WP_011245884.1">
    <property type="nucleotide sequence ID" value="NC_006582.1"/>
</dbReference>
<dbReference type="SMR" id="Q5WJ87"/>
<dbReference type="STRING" id="66692.ABC1029"/>
<dbReference type="KEGG" id="bcl:ABC1029"/>
<dbReference type="eggNOG" id="COG0047">
    <property type="taxonomic scope" value="Bacteria"/>
</dbReference>
<dbReference type="HOGENOM" id="CLU_001031_3_1_9"/>
<dbReference type="OrthoDB" id="9804441at2"/>
<dbReference type="UniPathway" id="UPA00074">
    <property type="reaction ID" value="UER00128"/>
</dbReference>
<dbReference type="Proteomes" id="UP000001168">
    <property type="component" value="Chromosome"/>
</dbReference>
<dbReference type="GO" id="GO:0005737">
    <property type="term" value="C:cytoplasm"/>
    <property type="evidence" value="ECO:0007669"/>
    <property type="project" value="UniProtKB-SubCell"/>
</dbReference>
<dbReference type="GO" id="GO:0005524">
    <property type="term" value="F:ATP binding"/>
    <property type="evidence" value="ECO:0007669"/>
    <property type="project" value="UniProtKB-KW"/>
</dbReference>
<dbReference type="GO" id="GO:0004359">
    <property type="term" value="F:glutaminase activity"/>
    <property type="evidence" value="ECO:0007669"/>
    <property type="project" value="UniProtKB-EC"/>
</dbReference>
<dbReference type="GO" id="GO:0004642">
    <property type="term" value="F:phosphoribosylformylglycinamidine synthase activity"/>
    <property type="evidence" value="ECO:0007669"/>
    <property type="project" value="UniProtKB-UniRule"/>
</dbReference>
<dbReference type="GO" id="GO:0006189">
    <property type="term" value="P:'de novo' IMP biosynthetic process"/>
    <property type="evidence" value="ECO:0007669"/>
    <property type="project" value="UniProtKB-UniRule"/>
</dbReference>
<dbReference type="CDD" id="cd01740">
    <property type="entry name" value="GATase1_FGAR_AT"/>
    <property type="match status" value="1"/>
</dbReference>
<dbReference type="FunFam" id="3.40.50.880:FF:000019">
    <property type="entry name" value="Phosphoribosylformylglycinamidine synthase subunit PurQ"/>
    <property type="match status" value="1"/>
</dbReference>
<dbReference type="Gene3D" id="3.40.50.880">
    <property type="match status" value="1"/>
</dbReference>
<dbReference type="HAMAP" id="MF_00421">
    <property type="entry name" value="PurQ"/>
    <property type="match status" value="1"/>
</dbReference>
<dbReference type="InterPro" id="IPR029062">
    <property type="entry name" value="Class_I_gatase-like"/>
</dbReference>
<dbReference type="InterPro" id="IPR010075">
    <property type="entry name" value="PRibForGlyAmidine_synth_PurQ"/>
</dbReference>
<dbReference type="NCBIfam" id="TIGR01737">
    <property type="entry name" value="FGAM_synth_I"/>
    <property type="match status" value="1"/>
</dbReference>
<dbReference type="NCBIfam" id="NF002957">
    <property type="entry name" value="PRK03619.1"/>
    <property type="match status" value="1"/>
</dbReference>
<dbReference type="PANTHER" id="PTHR47552">
    <property type="entry name" value="PHOSPHORIBOSYLFORMYLGLYCINAMIDINE SYNTHASE SUBUNIT PURQ"/>
    <property type="match status" value="1"/>
</dbReference>
<dbReference type="PANTHER" id="PTHR47552:SF1">
    <property type="entry name" value="PHOSPHORIBOSYLFORMYLGLYCINAMIDINE SYNTHASE SUBUNIT PURQ"/>
    <property type="match status" value="1"/>
</dbReference>
<dbReference type="Pfam" id="PF13507">
    <property type="entry name" value="GATase_5"/>
    <property type="match status" value="1"/>
</dbReference>
<dbReference type="PIRSF" id="PIRSF001586">
    <property type="entry name" value="FGAM_synth_I"/>
    <property type="match status" value="1"/>
</dbReference>
<dbReference type="SMART" id="SM01211">
    <property type="entry name" value="GATase_5"/>
    <property type="match status" value="1"/>
</dbReference>
<dbReference type="SUPFAM" id="SSF52317">
    <property type="entry name" value="Class I glutamine amidotransferase-like"/>
    <property type="match status" value="1"/>
</dbReference>
<dbReference type="PROSITE" id="PS51273">
    <property type="entry name" value="GATASE_TYPE_1"/>
    <property type="match status" value="1"/>
</dbReference>
<comment type="function">
    <text evidence="1">Part of the phosphoribosylformylglycinamidine synthase complex involved in the purines biosynthetic pathway. Catalyzes the ATP-dependent conversion of formylglycinamide ribonucleotide (FGAR) and glutamine to yield formylglycinamidine ribonucleotide (FGAM) and glutamate. The FGAM synthase complex is composed of three subunits. PurQ produces an ammonia molecule by converting glutamine to glutamate. PurL transfers the ammonia molecule to FGAR to form FGAM in an ATP-dependent manner. PurS interacts with PurQ and PurL and is thought to assist in the transfer of the ammonia molecule from PurQ to PurL.</text>
</comment>
<comment type="catalytic activity">
    <reaction evidence="1">
        <text>N(2)-formyl-N(1)-(5-phospho-beta-D-ribosyl)glycinamide + L-glutamine + ATP + H2O = 2-formamido-N(1)-(5-O-phospho-beta-D-ribosyl)acetamidine + L-glutamate + ADP + phosphate + H(+)</text>
        <dbReference type="Rhea" id="RHEA:17129"/>
        <dbReference type="ChEBI" id="CHEBI:15377"/>
        <dbReference type="ChEBI" id="CHEBI:15378"/>
        <dbReference type="ChEBI" id="CHEBI:29985"/>
        <dbReference type="ChEBI" id="CHEBI:30616"/>
        <dbReference type="ChEBI" id="CHEBI:43474"/>
        <dbReference type="ChEBI" id="CHEBI:58359"/>
        <dbReference type="ChEBI" id="CHEBI:147286"/>
        <dbReference type="ChEBI" id="CHEBI:147287"/>
        <dbReference type="ChEBI" id="CHEBI:456216"/>
        <dbReference type="EC" id="6.3.5.3"/>
    </reaction>
</comment>
<comment type="catalytic activity">
    <reaction evidence="1">
        <text>L-glutamine + H2O = L-glutamate + NH4(+)</text>
        <dbReference type="Rhea" id="RHEA:15889"/>
        <dbReference type="ChEBI" id="CHEBI:15377"/>
        <dbReference type="ChEBI" id="CHEBI:28938"/>
        <dbReference type="ChEBI" id="CHEBI:29985"/>
        <dbReference type="ChEBI" id="CHEBI:58359"/>
        <dbReference type="EC" id="3.5.1.2"/>
    </reaction>
</comment>
<comment type="pathway">
    <text evidence="1">Purine metabolism; IMP biosynthesis via de novo pathway; 5-amino-1-(5-phospho-D-ribosyl)imidazole from N(2)-formyl-N(1)-(5-phospho-D-ribosyl)glycinamide: step 1/2.</text>
</comment>
<comment type="subunit">
    <text evidence="1">Part of the FGAM synthase complex composed of 1 PurL, 1 PurQ and 2 PurS subunits.</text>
</comment>
<comment type="subcellular location">
    <subcellularLocation>
        <location evidence="1">Cytoplasm</location>
    </subcellularLocation>
</comment>
<evidence type="ECO:0000255" key="1">
    <source>
        <dbReference type="HAMAP-Rule" id="MF_00421"/>
    </source>
</evidence>
<feature type="chain" id="PRO_0000100538" description="Phosphoribosylformylglycinamidine synthase subunit PurQ">
    <location>
        <begin position="1"/>
        <end position="227"/>
    </location>
</feature>
<feature type="domain" description="Glutamine amidotransferase type-1" evidence="1">
    <location>
        <begin position="3"/>
        <end position="227"/>
    </location>
</feature>
<feature type="active site" description="Nucleophile" evidence="1">
    <location>
        <position position="86"/>
    </location>
</feature>
<feature type="active site" evidence="1">
    <location>
        <position position="194"/>
    </location>
</feature>
<feature type="active site" evidence="1">
    <location>
        <position position="196"/>
    </location>
</feature>
<proteinExistence type="inferred from homology"/>
<name>PURQ_SHOC1</name>
<reference key="1">
    <citation type="submission" date="2003-10" db="EMBL/GenBank/DDBJ databases">
        <title>The complete genome sequence of the alkaliphilic Bacillus clausii KSM-K16.</title>
        <authorList>
            <person name="Takaki Y."/>
            <person name="Kageyama Y."/>
            <person name="Shimamura S."/>
            <person name="Suzuki H."/>
            <person name="Nishi S."/>
            <person name="Hatada Y."/>
            <person name="Kawai S."/>
            <person name="Ito S."/>
            <person name="Horikoshi K."/>
        </authorList>
    </citation>
    <scope>NUCLEOTIDE SEQUENCE [LARGE SCALE GENOMIC DNA]</scope>
    <source>
        <strain>KSM-K16</strain>
    </source>
</reference>
<accession>Q5WJ87</accession>
<gene>
    <name evidence="1" type="primary">purQ</name>
    <name type="ordered locus">ABC1029</name>
</gene>
<keyword id="KW-0067">ATP-binding</keyword>
<keyword id="KW-0963">Cytoplasm</keyword>
<keyword id="KW-0315">Glutamine amidotransferase</keyword>
<keyword id="KW-0378">Hydrolase</keyword>
<keyword id="KW-0436">Ligase</keyword>
<keyword id="KW-0547">Nucleotide-binding</keyword>
<keyword id="KW-0658">Purine biosynthesis</keyword>
<keyword id="KW-1185">Reference proteome</keyword>
<sequence length="227" mass="24776">MKFAVIVFPGSNCDADMYHAIKDGLGEEVEYVFHTETSLDGFDAVLLPGGFSHGDYLRSGAIARFAPIMPAVIQAAEAGKPVLGVCNGFQVLLEAGLLPGAMKRNIDLKFVCRTVELVVENNETMFSSGYEQGQTIRIPVAHGEGNYECDDETLAKLRENKQIVFRYNEHVNGSKGDIAGITNERGNVLGMMPHPERATETLLGNDQGLAVFTSILRNWRESHVTAS</sequence>
<organism>
    <name type="scientific">Shouchella clausii (strain KSM-K16)</name>
    <name type="common">Alkalihalobacillus clausii</name>
    <dbReference type="NCBI Taxonomy" id="66692"/>
    <lineage>
        <taxon>Bacteria</taxon>
        <taxon>Bacillati</taxon>
        <taxon>Bacillota</taxon>
        <taxon>Bacilli</taxon>
        <taxon>Bacillales</taxon>
        <taxon>Bacillaceae</taxon>
        <taxon>Shouchella</taxon>
    </lineage>
</organism>
<protein>
    <recommendedName>
        <fullName evidence="1">Phosphoribosylformylglycinamidine synthase subunit PurQ</fullName>
        <shortName evidence="1">FGAM synthase</shortName>
        <ecNumber evidence="1">6.3.5.3</ecNumber>
    </recommendedName>
    <alternativeName>
        <fullName evidence="1">Formylglycinamide ribonucleotide amidotransferase subunit I</fullName>
        <shortName evidence="1">FGAR amidotransferase I</shortName>
        <shortName evidence="1">FGAR-AT I</shortName>
    </alternativeName>
    <alternativeName>
        <fullName evidence="1">Glutaminase PurQ</fullName>
        <ecNumber evidence="1">3.5.1.2</ecNumber>
    </alternativeName>
    <alternativeName>
        <fullName evidence="1">Phosphoribosylformylglycinamidine synthase subunit I</fullName>
    </alternativeName>
</protein>